<comment type="function">
    <text evidence="1">Could be involved in septation.</text>
</comment>
<comment type="similarity">
    <text evidence="1">Belongs to the SpoVG family.</text>
</comment>
<feature type="chain" id="PRO_1000213097" description="Putative septation protein SpoVG">
    <location>
        <begin position="1"/>
        <end position="95"/>
    </location>
</feature>
<keyword id="KW-0131">Cell cycle</keyword>
<keyword id="KW-0132">Cell division</keyword>
<keyword id="KW-0717">Septation</keyword>
<dbReference type="EMBL" id="CP001083">
    <property type="protein sequence ID" value="ACQ54365.1"/>
    <property type="molecule type" value="Genomic_DNA"/>
</dbReference>
<dbReference type="RefSeq" id="WP_003359319.1">
    <property type="nucleotide sequence ID" value="NC_012658.1"/>
</dbReference>
<dbReference type="SMR" id="C3KWA2"/>
<dbReference type="GeneID" id="92940335"/>
<dbReference type="KEGG" id="cbi:CLJ_B3876"/>
<dbReference type="HOGENOM" id="CLU_103669_2_1_9"/>
<dbReference type="Proteomes" id="UP000002333">
    <property type="component" value="Chromosome"/>
</dbReference>
<dbReference type="GO" id="GO:0000917">
    <property type="term" value="P:division septum assembly"/>
    <property type="evidence" value="ECO:0007669"/>
    <property type="project" value="UniProtKB-KW"/>
</dbReference>
<dbReference type="GO" id="GO:0030435">
    <property type="term" value="P:sporulation resulting in formation of a cellular spore"/>
    <property type="evidence" value="ECO:0007669"/>
    <property type="project" value="InterPro"/>
</dbReference>
<dbReference type="Gene3D" id="3.30.1120.40">
    <property type="entry name" value="Stage V sporulation protein G"/>
    <property type="match status" value="1"/>
</dbReference>
<dbReference type="HAMAP" id="MF_00819">
    <property type="entry name" value="SpoVG"/>
    <property type="match status" value="1"/>
</dbReference>
<dbReference type="InterPro" id="IPR007170">
    <property type="entry name" value="SpoVG"/>
</dbReference>
<dbReference type="InterPro" id="IPR036751">
    <property type="entry name" value="SpoVG_sf"/>
</dbReference>
<dbReference type="NCBIfam" id="NF009749">
    <property type="entry name" value="PRK13259.1"/>
    <property type="match status" value="1"/>
</dbReference>
<dbReference type="PANTHER" id="PTHR38429">
    <property type="entry name" value="SEPTATION PROTEIN SPOVG-RELATED"/>
    <property type="match status" value="1"/>
</dbReference>
<dbReference type="PANTHER" id="PTHR38429:SF1">
    <property type="entry name" value="SEPTATION PROTEIN SPOVG-RELATED"/>
    <property type="match status" value="1"/>
</dbReference>
<dbReference type="Pfam" id="PF04026">
    <property type="entry name" value="SpoVG"/>
    <property type="match status" value="1"/>
</dbReference>
<dbReference type="SUPFAM" id="SSF160537">
    <property type="entry name" value="SpoVG-like"/>
    <property type="match status" value="1"/>
</dbReference>
<proteinExistence type="inferred from homology"/>
<sequence>MQITDVRVRKIAAEGKMKAIVSVTFDNEFVVHDIKVIEGQNGLFIAMPSRKTPDGEYKDIAHPINTETREKIQKSIIEEYERAKMEEESSEKVQE</sequence>
<reference key="1">
    <citation type="submission" date="2008-05" db="EMBL/GenBank/DDBJ databases">
        <title>Genome sequence of Clostridium botulinum Ba4 strain 657.</title>
        <authorList>
            <person name="Shrivastava S."/>
            <person name="Brown J.L."/>
            <person name="Bruce D."/>
            <person name="Detter C."/>
            <person name="Munk C."/>
            <person name="Smith L.A."/>
            <person name="Smith T.J."/>
            <person name="Sutton G."/>
            <person name="Brettin T.S."/>
        </authorList>
    </citation>
    <scope>NUCLEOTIDE SEQUENCE [LARGE SCALE GENOMIC DNA]</scope>
    <source>
        <strain>657 / Type Ba4</strain>
    </source>
</reference>
<evidence type="ECO:0000255" key="1">
    <source>
        <dbReference type="HAMAP-Rule" id="MF_00819"/>
    </source>
</evidence>
<protein>
    <recommendedName>
        <fullName evidence="1">Putative septation protein SpoVG</fullName>
    </recommendedName>
</protein>
<gene>
    <name evidence="1" type="primary">spoVG</name>
    <name type="ordered locus">CLJ_B3876</name>
</gene>
<accession>C3KWA2</accession>
<name>SP5G_CLOB6</name>
<organism>
    <name type="scientific">Clostridium botulinum (strain 657 / Type Ba4)</name>
    <dbReference type="NCBI Taxonomy" id="515621"/>
    <lineage>
        <taxon>Bacteria</taxon>
        <taxon>Bacillati</taxon>
        <taxon>Bacillota</taxon>
        <taxon>Clostridia</taxon>
        <taxon>Eubacteriales</taxon>
        <taxon>Clostridiaceae</taxon>
        <taxon>Clostridium</taxon>
    </lineage>
</organism>